<comment type="function">
    <text evidence="1">Troponin I is the inhibitory subunit of troponin, the thin filament regulatory complex which confers calcium-sensitivity to muscle actomyosin ATPase activity.</text>
</comment>
<comment type="tissue specificity">
    <text evidence="3 4">Expressed in body wall muscle from first larval stage to adult. In adults expression is predominantly in vulval and anal muscles, body wall muscle expression is weaker. Also expressed in vulval muscles of hermaphrodites and the sex muscles of males.</text>
</comment>
<comment type="disruption phenotype">
    <text evidence="4">Worms exhibit abnormal muscle morphology, egg laying defects and constipation.</text>
</comment>
<comment type="similarity">
    <text evidence="5">Belongs to the troponin I family.</text>
</comment>
<proteinExistence type="evidence at transcript level"/>
<sequence length="260" mass="29839">MLIEDENIRYGGAQADVEDDAARKAQERELKKAEVRKRMEEAAKKGSKKKGFLTPERKKKLRKLLMMKAAEDLKQQQMLKEQERQKTLQQRTIPLPDVDSINDQGQLLKIYEDMFARVCALEEEKFDINFGVSQTEAEINQLTIQVNDLRGKFVKPTLKKVSKYDNKFKSSGEVKEKSNFRNNLKVVKKETDLDEIMAKKKGTADGKPEWSKKEKKEEEAAPVELAAPVEPEAEPEPEAAEPAAEEPEAEEEEEEEEEEE</sequence>
<reference key="1">
    <citation type="journal article" date="2005" name="Genes Cells">
        <title>Tissue expression of four troponin I genes and their molecular interactions with two troponin C isoforms in Caenorhabditis elegans.</title>
        <authorList>
            <person name="Ruksana R."/>
            <person name="Kuroda K."/>
            <person name="Terami H."/>
            <person name="Bando T."/>
            <person name="Kitaoka S."/>
            <person name="Takaya T."/>
            <person name="Sakube Y."/>
            <person name="Kagawa H."/>
        </authorList>
    </citation>
    <scope>NUCLEOTIDE SEQUENCE [GENOMIC DNA]</scope>
    <scope>TISSUE SPECIFICITY</scope>
    <scope>DISRUPTION PHENOTYPE</scope>
</reference>
<reference key="2">
    <citation type="journal article" date="1998" name="Science">
        <title>Genome sequence of the nematode C. elegans: a platform for investigating biology.</title>
        <authorList>
            <consortium name="The C. elegans sequencing consortium"/>
        </authorList>
    </citation>
    <scope>NUCLEOTIDE SEQUENCE [LARGE SCALE GENOMIC DNA]</scope>
    <source>
        <strain>Bristol N2</strain>
    </source>
</reference>
<reference key="3">
    <citation type="journal article" date="2004" name="Biophys. J.">
        <title>Disruption of Caenorhabditis elegans muscle structure and function caused by mutation of troponin I.</title>
        <authorList>
            <person name="Burkeen A.K."/>
            <person name="Maday S.L."/>
            <person name="Rybicka K.K."/>
            <person name="Sulcove J.A."/>
            <person name="Ward J."/>
            <person name="Huang M.M."/>
            <person name="Barstead R."/>
            <person name="Franzini-Armstrong C."/>
            <person name="Allen T.S."/>
        </authorList>
    </citation>
    <scope>TISSUE SPECIFICITY</scope>
</reference>
<accession>Q9XUN9</accession>
<accession>Q5FBV4</accession>
<name>TNNI3_CAEEL</name>
<feature type="chain" id="PRO_0000186163" description="Troponin I 3">
    <location>
        <begin position="1"/>
        <end position="260"/>
    </location>
</feature>
<feature type="region of interest" description="Disordered" evidence="2">
    <location>
        <begin position="192"/>
        <end position="260"/>
    </location>
</feature>
<feature type="compositionally biased region" description="Basic and acidic residues" evidence="2">
    <location>
        <begin position="192"/>
        <end position="219"/>
    </location>
</feature>
<feature type="compositionally biased region" description="Acidic residues" evidence="2">
    <location>
        <begin position="231"/>
        <end position="260"/>
    </location>
</feature>
<organism>
    <name type="scientific">Caenorhabditis elegans</name>
    <dbReference type="NCBI Taxonomy" id="6239"/>
    <lineage>
        <taxon>Eukaryota</taxon>
        <taxon>Metazoa</taxon>
        <taxon>Ecdysozoa</taxon>
        <taxon>Nematoda</taxon>
        <taxon>Chromadorea</taxon>
        <taxon>Rhabditida</taxon>
        <taxon>Rhabditina</taxon>
        <taxon>Rhabditomorpha</taxon>
        <taxon>Rhabditoidea</taxon>
        <taxon>Rhabditidae</taxon>
        <taxon>Peloderinae</taxon>
        <taxon>Caenorhabditis</taxon>
    </lineage>
</organism>
<gene>
    <name type="primary">tni-3</name>
    <name type="ORF">T20B3.2</name>
</gene>
<protein>
    <recommendedName>
        <fullName>Troponin I 3</fullName>
        <shortName>CeTNI-3</shortName>
        <shortName>TnI 3</shortName>
    </recommendedName>
</protein>
<evidence type="ECO:0000250" key="1"/>
<evidence type="ECO:0000256" key="2">
    <source>
        <dbReference type="SAM" id="MobiDB-lite"/>
    </source>
</evidence>
<evidence type="ECO:0000269" key="3">
    <source>
    </source>
</evidence>
<evidence type="ECO:0000269" key="4">
    <source>
    </source>
</evidence>
<evidence type="ECO:0000305" key="5"/>
<dbReference type="EMBL" id="AB107359">
    <property type="protein sequence ID" value="BAD89380.1"/>
    <property type="molecule type" value="Genomic_DNA"/>
</dbReference>
<dbReference type="EMBL" id="Z81593">
    <property type="protein sequence ID" value="CAB04737.1"/>
    <property type="molecule type" value="Genomic_DNA"/>
</dbReference>
<dbReference type="PIR" id="T25017">
    <property type="entry name" value="T25017"/>
</dbReference>
<dbReference type="RefSeq" id="NP_507250.1">
    <property type="nucleotide sequence ID" value="NM_074849.9"/>
</dbReference>
<dbReference type="SMR" id="Q9XUN9"/>
<dbReference type="BioGRID" id="45113">
    <property type="interactions" value="8"/>
</dbReference>
<dbReference type="DIP" id="DIP-27192N"/>
<dbReference type="FunCoup" id="Q9XUN9">
    <property type="interactions" value="22"/>
</dbReference>
<dbReference type="IntAct" id="Q9XUN9">
    <property type="interactions" value="2"/>
</dbReference>
<dbReference type="MINT" id="Q9XUN9"/>
<dbReference type="STRING" id="6239.T20B3.2.2"/>
<dbReference type="PaxDb" id="6239-T20B3.2.1"/>
<dbReference type="PeptideAtlas" id="Q9XUN9"/>
<dbReference type="EnsemblMetazoa" id="T20B3.2.1">
    <property type="protein sequence ID" value="T20B3.2.1"/>
    <property type="gene ID" value="WBGene00006585"/>
</dbReference>
<dbReference type="GeneID" id="180127"/>
<dbReference type="KEGG" id="cel:CELE_T20B3.2"/>
<dbReference type="UCSC" id="T20B3.2.1">
    <property type="organism name" value="c. elegans"/>
</dbReference>
<dbReference type="AGR" id="WB:WBGene00006585"/>
<dbReference type="CTD" id="180127"/>
<dbReference type="WormBase" id="T20B3.2">
    <property type="protein sequence ID" value="CE20087"/>
    <property type="gene ID" value="WBGene00006585"/>
    <property type="gene designation" value="tni-3"/>
</dbReference>
<dbReference type="eggNOG" id="KOG3977">
    <property type="taxonomic scope" value="Eukaryota"/>
</dbReference>
<dbReference type="GeneTree" id="ENSGT01030000234588"/>
<dbReference type="HOGENOM" id="CLU_053937_0_0_1"/>
<dbReference type="InParanoid" id="Q9XUN9"/>
<dbReference type="OMA" id="MFARVCA"/>
<dbReference type="OrthoDB" id="371899at2759"/>
<dbReference type="PhylomeDB" id="Q9XUN9"/>
<dbReference type="Reactome" id="R-CEL-5578775">
    <property type="pathway name" value="Ion homeostasis"/>
</dbReference>
<dbReference type="PRO" id="PR:Q9XUN9"/>
<dbReference type="Proteomes" id="UP000001940">
    <property type="component" value="Chromosome V"/>
</dbReference>
<dbReference type="Bgee" id="WBGene00006585">
    <property type="expression patterns" value="Expressed in male organism and 17 other cell types or tissues"/>
</dbReference>
<dbReference type="GO" id="GO:0030016">
    <property type="term" value="C:myofibril"/>
    <property type="evidence" value="ECO:0007005"/>
    <property type="project" value="WormBase"/>
</dbReference>
<dbReference type="GO" id="GO:0030017">
    <property type="term" value="C:sarcomere"/>
    <property type="evidence" value="ECO:0000314"/>
    <property type="project" value="WormBase"/>
</dbReference>
<dbReference type="GO" id="GO:0005861">
    <property type="term" value="C:troponin complex"/>
    <property type="evidence" value="ECO:0000318"/>
    <property type="project" value="GO_Central"/>
</dbReference>
<dbReference type="GO" id="GO:0003779">
    <property type="term" value="F:actin binding"/>
    <property type="evidence" value="ECO:0007669"/>
    <property type="project" value="UniProtKB-KW"/>
</dbReference>
<dbReference type="GO" id="GO:0030172">
    <property type="term" value="F:troponin C binding"/>
    <property type="evidence" value="ECO:0000353"/>
    <property type="project" value="WormBase"/>
</dbReference>
<dbReference type="GO" id="GO:0018991">
    <property type="term" value="P:egg-laying behavior"/>
    <property type="evidence" value="ECO:0000315"/>
    <property type="project" value="WormBase"/>
</dbReference>
<dbReference type="GO" id="GO:0006936">
    <property type="term" value="P:muscle contraction"/>
    <property type="evidence" value="ECO:0000315"/>
    <property type="project" value="WormBase"/>
</dbReference>
<dbReference type="GO" id="GO:0040032">
    <property type="term" value="P:post-embryonic body morphogenesis"/>
    <property type="evidence" value="ECO:0000315"/>
    <property type="project" value="WormBase"/>
</dbReference>
<dbReference type="FunFam" id="1.20.5.350:FF:000005">
    <property type="entry name" value="Troponin I 1"/>
    <property type="match status" value="1"/>
</dbReference>
<dbReference type="Gene3D" id="1.20.5.350">
    <property type="match status" value="1"/>
</dbReference>
<dbReference type="InterPro" id="IPR001978">
    <property type="entry name" value="Troponin"/>
</dbReference>
<dbReference type="InterPro" id="IPR050875">
    <property type="entry name" value="Troponin_I"/>
</dbReference>
<dbReference type="InterPro" id="IPR038077">
    <property type="entry name" value="Troponin_sf"/>
</dbReference>
<dbReference type="PANTHER" id="PTHR13738">
    <property type="entry name" value="TROPONIN I"/>
    <property type="match status" value="1"/>
</dbReference>
<dbReference type="PANTHER" id="PTHR13738:SF1">
    <property type="entry name" value="TROPONIN I"/>
    <property type="match status" value="1"/>
</dbReference>
<dbReference type="Pfam" id="PF00992">
    <property type="entry name" value="Troponin"/>
    <property type="match status" value="1"/>
</dbReference>
<dbReference type="SUPFAM" id="SSF90250">
    <property type="entry name" value="Troponin coil-coiled subunits"/>
    <property type="match status" value="1"/>
</dbReference>
<keyword id="KW-0009">Actin-binding</keyword>
<keyword id="KW-0514">Muscle protein</keyword>
<keyword id="KW-1185">Reference proteome</keyword>